<gene>
    <name type="ORF">IIV6-466R</name>
</gene>
<name>VF466_IIV6</name>
<accession>Q91F60</accession>
<feature type="chain" id="PRO_0000377897" description="Uncharacterized protein 466R">
    <location>
        <begin position="1"/>
        <end position="90"/>
    </location>
</feature>
<feature type="transmembrane region" description="Helical" evidence="1">
    <location>
        <begin position="69"/>
        <end position="89"/>
    </location>
</feature>
<comment type="subcellular location">
    <subcellularLocation>
        <location evidence="2">Membrane</location>
        <topology evidence="2">Single-pass membrane protein</topology>
    </subcellularLocation>
</comment>
<comment type="similarity">
    <text evidence="2">Belongs to the IIV-6 466R family.</text>
</comment>
<reference key="1">
    <citation type="journal article" date="2001" name="Virology">
        <title>Analysis of the first complete DNA sequence of an invertebrate iridovirus: coding strategy of the genome of Chilo iridescent virus.</title>
        <authorList>
            <person name="Jakob N.J."/>
            <person name="Mueller K."/>
            <person name="Bahr U."/>
            <person name="Darai G."/>
        </authorList>
    </citation>
    <scope>NUCLEOTIDE SEQUENCE [LARGE SCALE GENOMIC DNA]</scope>
</reference>
<reference key="2">
    <citation type="journal article" date="2007" name="Virol. J.">
        <title>Comparative genomic analysis of the family Iridoviridae: re-annotating and defining the core set of iridovirus genes.</title>
        <authorList>
            <person name="Eaton H.E."/>
            <person name="Metcalf J."/>
            <person name="Penny E."/>
            <person name="Tcherepanov V."/>
            <person name="Upton C."/>
            <person name="Brunetti C.R."/>
        </authorList>
    </citation>
    <scope>GENOME REANNOTATION</scope>
</reference>
<dbReference type="EMBL" id="AF303741">
    <property type="protein sequence ID" value="AAK82326.1"/>
    <property type="molecule type" value="Genomic_DNA"/>
</dbReference>
<dbReference type="RefSeq" id="NP_149929.1">
    <property type="nucleotide sequence ID" value="NC_003038.1"/>
</dbReference>
<dbReference type="KEGG" id="vg:1732976"/>
<dbReference type="OrthoDB" id="40726at10239"/>
<dbReference type="Proteomes" id="UP000001359">
    <property type="component" value="Genome"/>
</dbReference>
<dbReference type="GO" id="GO:0016020">
    <property type="term" value="C:membrane"/>
    <property type="evidence" value="ECO:0007669"/>
    <property type="project" value="UniProtKB-SubCell"/>
</dbReference>
<keyword id="KW-0472">Membrane</keyword>
<keyword id="KW-1185">Reference proteome</keyword>
<keyword id="KW-0812">Transmembrane</keyword>
<keyword id="KW-1133">Transmembrane helix</keyword>
<organism>
    <name type="scientific">Invertebrate iridescent virus 6</name>
    <name type="common">IIV-6</name>
    <name type="synonym">Chilo iridescent virus</name>
    <dbReference type="NCBI Taxonomy" id="176652"/>
    <lineage>
        <taxon>Viruses</taxon>
        <taxon>Varidnaviria</taxon>
        <taxon>Bamfordvirae</taxon>
        <taxon>Nucleocytoviricota</taxon>
        <taxon>Megaviricetes</taxon>
        <taxon>Pimascovirales</taxon>
        <taxon>Iridoviridae</taxon>
        <taxon>Betairidovirinae</taxon>
        <taxon>Iridovirus</taxon>
    </lineage>
</organism>
<organismHost>
    <name type="scientific">Acheta domesticus</name>
    <name type="common">House cricket</name>
    <dbReference type="NCBI Taxonomy" id="6997"/>
</organismHost>
<organismHost>
    <name type="scientific">Chilo suppressalis</name>
    <name type="common">Asiatic rice borer moth</name>
    <dbReference type="NCBI Taxonomy" id="168631"/>
</organismHost>
<organismHost>
    <name type="scientific">Gryllus bimaculatus</name>
    <name type="common">Two-spotted cricket</name>
    <dbReference type="NCBI Taxonomy" id="6999"/>
</organismHost>
<organismHost>
    <name type="scientific">Gryllus campestris</name>
    <dbReference type="NCBI Taxonomy" id="58607"/>
</organismHost>
<organismHost>
    <name type="scientific">Spodoptera frugiperda</name>
    <name type="common">Fall armyworm</name>
    <dbReference type="NCBI Taxonomy" id="7108"/>
</organismHost>
<evidence type="ECO:0000255" key="1"/>
<evidence type="ECO:0000305" key="2"/>
<sequence length="90" mass="10193">MNMPGKTPIEKIVSLSAKPFKVSRGSPRDDKERSYENTFRTPIPYNCPDVSTHLSDCPVCSNLYGKEKLLYIFLGAMIVIIFLVIKNQLN</sequence>
<proteinExistence type="inferred from homology"/>
<protein>
    <recommendedName>
        <fullName>Uncharacterized protein 466R</fullName>
    </recommendedName>
</protein>